<accession>A8FMN2</accession>
<evidence type="ECO:0000255" key="1">
    <source>
        <dbReference type="HAMAP-Rule" id="MF_00236"/>
    </source>
</evidence>
<evidence type="ECO:0000256" key="2">
    <source>
        <dbReference type="SAM" id="MobiDB-lite"/>
    </source>
</evidence>
<comment type="function">
    <text evidence="1">Part of the twin-arginine translocation (Tat) system that transports large folded proteins containing a characteristic twin-arginine motif in their signal peptide across membranes. TatA could form the protein-conducting channel of the Tat system.</text>
</comment>
<comment type="subunit">
    <text evidence="1">The Tat system comprises two distinct complexes: a TatABC complex, containing multiple copies of TatA, TatB and TatC subunits, and a separate TatA complex, containing only TatA subunits. Substrates initially bind to the TatABC complex, which probably triggers association of the separate TatA complex to form the active translocon.</text>
</comment>
<comment type="subcellular location">
    <subcellularLocation>
        <location evidence="1">Cell inner membrane</location>
        <topology evidence="1">Single-pass membrane protein</topology>
    </subcellularLocation>
</comment>
<comment type="similarity">
    <text evidence="1">Belongs to the TatA/E family.</text>
</comment>
<gene>
    <name evidence="1" type="primary">tatA</name>
    <name type="ordered locus">C8J_1120</name>
</gene>
<feature type="chain" id="PRO_1000071810" description="Sec-independent protein translocase protein TatA">
    <location>
        <begin position="1"/>
        <end position="79"/>
    </location>
</feature>
<feature type="transmembrane region" description="Helical" evidence="1">
    <location>
        <begin position="1"/>
        <end position="21"/>
    </location>
</feature>
<feature type="region of interest" description="Disordered" evidence="2">
    <location>
        <begin position="52"/>
        <end position="79"/>
    </location>
</feature>
<feature type="compositionally biased region" description="Basic and acidic residues" evidence="2">
    <location>
        <begin position="52"/>
        <end position="61"/>
    </location>
</feature>
<protein>
    <recommendedName>
        <fullName evidence="1">Sec-independent protein translocase protein TatA</fullName>
    </recommendedName>
</protein>
<name>TATA_CAMJ8</name>
<reference key="1">
    <citation type="journal article" date="2007" name="J. Bacteriol.">
        <title>The complete genome sequence of Campylobacter jejuni strain 81116 (NCTC11828).</title>
        <authorList>
            <person name="Pearson B.M."/>
            <person name="Gaskin D.J.H."/>
            <person name="Segers R.P.A.M."/>
            <person name="Wells J.M."/>
            <person name="Nuijten P.J.M."/>
            <person name="van Vliet A.H.M."/>
        </authorList>
    </citation>
    <scope>NUCLEOTIDE SEQUENCE [LARGE SCALE GENOMIC DNA]</scope>
    <source>
        <strain>81116 / NCTC 11828</strain>
    </source>
</reference>
<keyword id="KW-0997">Cell inner membrane</keyword>
<keyword id="KW-1003">Cell membrane</keyword>
<keyword id="KW-0472">Membrane</keyword>
<keyword id="KW-0653">Protein transport</keyword>
<keyword id="KW-0811">Translocation</keyword>
<keyword id="KW-0812">Transmembrane</keyword>
<keyword id="KW-1133">Transmembrane helix</keyword>
<keyword id="KW-0813">Transport</keyword>
<sequence>MGGWSSPSHWLIILLIVVLLFGAKKIPELAKGLGKGIKTFKDEMNNDDEVAKNTQKIEENKNTTNNTSADASIDKTKKA</sequence>
<organism>
    <name type="scientific">Campylobacter jejuni subsp. jejuni serotype O:6 (strain 81116 / NCTC 11828)</name>
    <dbReference type="NCBI Taxonomy" id="407148"/>
    <lineage>
        <taxon>Bacteria</taxon>
        <taxon>Pseudomonadati</taxon>
        <taxon>Campylobacterota</taxon>
        <taxon>Epsilonproteobacteria</taxon>
        <taxon>Campylobacterales</taxon>
        <taxon>Campylobacteraceae</taxon>
        <taxon>Campylobacter</taxon>
    </lineage>
</organism>
<proteinExistence type="inferred from homology"/>
<dbReference type="EMBL" id="CP000814">
    <property type="protein sequence ID" value="ABV52719.1"/>
    <property type="molecule type" value="Genomic_DNA"/>
</dbReference>
<dbReference type="RefSeq" id="WP_002877135.1">
    <property type="nucleotide sequence ID" value="NC_009839.1"/>
</dbReference>
<dbReference type="SMR" id="A8FMN2"/>
<dbReference type="KEGG" id="cju:C8J_1120"/>
<dbReference type="HOGENOM" id="CLU_086034_5_4_7"/>
<dbReference type="GO" id="GO:0033281">
    <property type="term" value="C:TAT protein transport complex"/>
    <property type="evidence" value="ECO:0007669"/>
    <property type="project" value="UniProtKB-UniRule"/>
</dbReference>
<dbReference type="GO" id="GO:0008320">
    <property type="term" value="F:protein transmembrane transporter activity"/>
    <property type="evidence" value="ECO:0007669"/>
    <property type="project" value="UniProtKB-UniRule"/>
</dbReference>
<dbReference type="GO" id="GO:0043953">
    <property type="term" value="P:protein transport by the Tat complex"/>
    <property type="evidence" value="ECO:0007669"/>
    <property type="project" value="UniProtKB-UniRule"/>
</dbReference>
<dbReference type="Gene3D" id="1.20.5.3310">
    <property type="match status" value="1"/>
</dbReference>
<dbReference type="HAMAP" id="MF_00236">
    <property type="entry name" value="TatA_E"/>
    <property type="match status" value="1"/>
</dbReference>
<dbReference type="InterPro" id="IPR003369">
    <property type="entry name" value="TatA/B/E"/>
</dbReference>
<dbReference type="InterPro" id="IPR006312">
    <property type="entry name" value="TatA/E"/>
</dbReference>
<dbReference type="NCBIfam" id="TIGR01411">
    <property type="entry name" value="tatAE"/>
    <property type="match status" value="1"/>
</dbReference>
<dbReference type="PANTHER" id="PTHR42982">
    <property type="entry name" value="SEC-INDEPENDENT PROTEIN TRANSLOCASE PROTEIN TATA"/>
    <property type="match status" value="1"/>
</dbReference>
<dbReference type="PANTHER" id="PTHR42982:SF1">
    <property type="entry name" value="SEC-INDEPENDENT PROTEIN TRANSLOCASE PROTEIN TATA"/>
    <property type="match status" value="1"/>
</dbReference>
<dbReference type="Pfam" id="PF02416">
    <property type="entry name" value="TatA_B_E"/>
    <property type="match status" value="1"/>
</dbReference>